<accession>Q1J7E5</accession>
<comment type="function">
    <text evidence="1">The heterodimer acts as both an ATP-dependent DNA helicase and an ATP-dependent, dual-direction single-stranded exonuclease. Recognizes the chi site generating a DNA molecule suitable for the initiation of homologous recombination. This subunit has 5' -&gt; 3' nuclease activity but not helicase activity.</text>
</comment>
<comment type="cofactor">
    <cofactor evidence="1">
        <name>Mg(2+)</name>
        <dbReference type="ChEBI" id="CHEBI:18420"/>
    </cofactor>
</comment>
<comment type="subunit">
    <text evidence="1">Heterodimer of AddA and RexB.</text>
</comment>
<comment type="miscellaneous">
    <text evidence="1">Despite having helicase-like domains, this subunit does not have helicase activity.</text>
</comment>
<comment type="similarity">
    <text evidence="1">Belongs to the helicase family. AddB/RexB type 2 subfamily.</text>
</comment>
<reference key="1">
    <citation type="journal article" date="2006" name="Proc. Natl. Acad. Sci. U.S.A.">
        <title>Molecular genetic anatomy of inter- and intraserotype variation in the human bacterial pathogen group A Streptococcus.</title>
        <authorList>
            <person name="Beres S.B."/>
            <person name="Richter E.W."/>
            <person name="Nagiec M.J."/>
            <person name="Sumby P."/>
            <person name="Porcella S.F."/>
            <person name="DeLeo F.R."/>
            <person name="Musser J.M."/>
        </authorList>
    </citation>
    <scope>NUCLEOTIDE SEQUENCE [LARGE SCALE GENOMIC DNA]</scope>
    <source>
        <strain>MGAS10750</strain>
    </source>
</reference>
<evidence type="ECO:0000255" key="1">
    <source>
        <dbReference type="HAMAP-Rule" id="MF_01453"/>
    </source>
</evidence>
<feature type="chain" id="PRO_0000379408" description="ATP-dependent helicase/deoxyribonuclease subunit B">
    <location>
        <begin position="1"/>
        <end position="1071"/>
    </location>
</feature>
<sequence>MKLIYTEMSYSMTEILVNEARKAADQGYRVFYIAPNSLSFEKEREVLTLLPERGTFSIIVTRFVQMSRYFTVESSPSKQHLDDTTLAMIFYRTLMQLKPEDLPSYGRLQNNSVFIEQLVELYKELKNAQLSVHDLTGLDHPQKQEDLIKIIELAETIMIQQDYNQDSPLQSFARAIKLGLLNNQLSKTVVVIDGFSRFSAEEDYLLSLLNNNCQEVIIGSYVSQKAYQKSFIKGNIYEASLHFLQDLAQKYHIKPVFATSNQVFKPAFSRLTQLFEATHDFSQVDWQLQKNDLDHFSLWQCHHQKEEIEHVAKSIRQKLYEGYRYKDILVLLGDMDAYQLQIGPIFDKFEIPYYLGKAEPMAAHPLVQFIESLERSQRYNWRREDILNMLKSGLFGCFDDSDIDRFEEYTQFADIKGFTKFSKPFTINSSRQYPLDFLNEMRQDIVLPLQELFKSQKQLGASLVDKLILFLKKIRLAENMQGLAQSQLEVEKNEEVWKRFTDILTSFHHIFGQEKLRLSDCLALIKTGMKSAQYRVVPATLDVVTIKSYDLVQPHSKPFVYAIGLTQSHFPKQIHHSGLLSDQERARINEIRNYRHFDIASAENSKKNHQTALSLFNAATKELVLSVPTVINETFDDLSPYLKELINFGLPLLDKGKNYLSYDNSDIANYKALLSQIIAINRQDLIEMSDQDKMFWTVVLRYLRKQLRKQQLELPTSDYRLSTKPLSKEVIEVCFPKGIPLKLSATALTVFYNNQYNYFLKYVLNLNKTESIHPDSRIHGQYLHRVFERLMKDHTQEPFDNKLKQAIYHTNQESFFQQVYQDNAEAEYSLAILEDIVRSTAPILQLNQNIQVIDQEKNFQLDMGNEILVHGIIDRIDQLSDGSLGIVDYKSSANQFDIGTFYNGLSPQLVTYLAALKQIAPHDINQLFGAMYLHLQDPKLDLVTFKQIDNTLVESIYKALTYKGIFSEVEKEHLSTGAYQTKNALYSNDELETLLNYNKYLYLKAAKHIKKGHFLINPYTSDGKTVQGDQLKAITRFEADLDMGQARRLVTLPAKEKKECFLTLMRKESHL</sequence>
<gene>
    <name evidence="1" type="primary">rexB</name>
    <name type="ordered locus">MGAS10750_Spy0679</name>
</gene>
<name>ADDB_STRPF</name>
<proteinExistence type="inferred from homology"/>
<protein>
    <recommendedName>
        <fullName evidence="1">ATP-dependent helicase/deoxyribonuclease subunit B</fullName>
        <ecNumber evidence="1">3.1.-.-</ecNumber>
    </recommendedName>
    <alternativeName>
        <fullName evidence="1">ATP-dependent helicase/nuclease subunit RexB</fullName>
    </alternativeName>
</protein>
<organism>
    <name type="scientific">Streptococcus pyogenes serotype M4 (strain MGAS10750)</name>
    <dbReference type="NCBI Taxonomy" id="370554"/>
    <lineage>
        <taxon>Bacteria</taxon>
        <taxon>Bacillati</taxon>
        <taxon>Bacillota</taxon>
        <taxon>Bacilli</taxon>
        <taxon>Lactobacillales</taxon>
        <taxon>Streptococcaceae</taxon>
        <taxon>Streptococcus</taxon>
    </lineage>
</organism>
<dbReference type="EC" id="3.1.-.-" evidence="1"/>
<dbReference type="EMBL" id="CP000262">
    <property type="protein sequence ID" value="ABF37629.1"/>
    <property type="molecule type" value="Genomic_DNA"/>
</dbReference>
<dbReference type="SMR" id="Q1J7E5"/>
<dbReference type="KEGG" id="spi:MGAS10750_Spy0679"/>
<dbReference type="HOGENOM" id="CLU_007838_1_0_9"/>
<dbReference type="Proteomes" id="UP000002434">
    <property type="component" value="Chromosome"/>
</dbReference>
<dbReference type="GO" id="GO:0008409">
    <property type="term" value="F:5'-3' exonuclease activity"/>
    <property type="evidence" value="ECO:0007669"/>
    <property type="project" value="UniProtKB-UniRule"/>
</dbReference>
<dbReference type="GO" id="GO:0005524">
    <property type="term" value="F:ATP binding"/>
    <property type="evidence" value="ECO:0007669"/>
    <property type="project" value="UniProtKB-UniRule"/>
</dbReference>
<dbReference type="GO" id="GO:0003690">
    <property type="term" value="F:double-stranded DNA binding"/>
    <property type="evidence" value="ECO:0007669"/>
    <property type="project" value="UniProtKB-UniRule"/>
</dbReference>
<dbReference type="GO" id="GO:0004386">
    <property type="term" value="F:helicase activity"/>
    <property type="evidence" value="ECO:0007669"/>
    <property type="project" value="UniProtKB-KW"/>
</dbReference>
<dbReference type="GO" id="GO:0016817">
    <property type="term" value="F:hydrolase activity, acting on acid anhydrides"/>
    <property type="evidence" value="ECO:0007669"/>
    <property type="project" value="InterPro"/>
</dbReference>
<dbReference type="GO" id="GO:0000724">
    <property type="term" value="P:double-strand break repair via homologous recombination"/>
    <property type="evidence" value="ECO:0007669"/>
    <property type="project" value="UniProtKB-UniRule"/>
</dbReference>
<dbReference type="Gene3D" id="3.90.320.10">
    <property type="match status" value="1"/>
</dbReference>
<dbReference type="Gene3D" id="3.40.50.300">
    <property type="entry name" value="P-loop containing nucleotide triphosphate hydrolases"/>
    <property type="match status" value="3"/>
</dbReference>
<dbReference type="HAMAP" id="MF_01453">
    <property type="entry name" value="AddB_type2"/>
    <property type="match status" value="1"/>
</dbReference>
<dbReference type="InterPro" id="IPR049035">
    <property type="entry name" value="ADDB_N"/>
</dbReference>
<dbReference type="InterPro" id="IPR014141">
    <property type="entry name" value="DNA_helicase_suRexB"/>
</dbReference>
<dbReference type="InterPro" id="IPR027417">
    <property type="entry name" value="P-loop_NTPase"/>
</dbReference>
<dbReference type="InterPro" id="IPR011604">
    <property type="entry name" value="PDDEXK-like_dom_sf"/>
</dbReference>
<dbReference type="InterPro" id="IPR038726">
    <property type="entry name" value="PDDEXK_AddAB-type"/>
</dbReference>
<dbReference type="InterPro" id="IPR011335">
    <property type="entry name" value="Restrct_endonuc-II-like"/>
</dbReference>
<dbReference type="NCBIfam" id="TIGR02774">
    <property type="entry name" value="rexB_recomb"/>
    <property type="match status" value="1"/>
</dbReference>
<dbReference type="PANTHER" id="PTHR30591">
    <property type="entry name" value="RECBCD ENZYME SUBUNIT RECC"/>
    <property type="match status" value="1"/>
</dbReference>
<dbReference type="PANTHER" id="PTHR30591:SF1">
    <property type="entry name" value="RECBCD ENZYME SUBUNIT RECC"/>
    <property type="match status" value="1"/>
</dbReference>
<dbReference type="Pfam" id="PF21445">
    <property type="entry name" value="ADDB_N"/>
    <property type="match status" value="1"/>
</dbReference>
<dbReference type="Pfam" id="PF12705">
    <property type="entry name" value="PDDEXK_1"/>
    <property type="match status" value="1"/>
</dbReference>
<dbReference type="SUPFAM" id="SSF52540">
    <property type="entry name" value="P-loop containing nucleoside triphosphate hydrolases"/>
    <property type="match status" value="1"/>
</dbReference>
<dbReference type="SUPFAM" id="SSF52980">
    <property type="entry name" value="Restriction endonuclease-like"/>
    <property type="match status" value="1"/>
</dbReference>
<keyword id="KW-0067">ATP-binding</keyword>
<keyword id="KW-0227">DNA damage</keyword>
<keyword id="KW-0234">DNA repair</keyword>
<keyword id="KW-0238">DNA-binding</keyword>
<keyword id="KW-0269">Exonuclease</keyword>
<keyword id="KW-0347">Helicase</keyword>
<keyword id="KW-0378">Hydrolase</keyword>
<keyword id="KW-0540">Nuclease</keyword>
<keyword id="KW-0547">Nucleotide-binding</keyword>